<accession>B4J789</accession>
<name>EIF3C_DROGR</name>
<proteinExistence type="inferred from homology"/>
<feature type="chain" id="PRO_0000365387" description="Eukaryotic translation initiation factor 3 subunit C">
    <location>
        <begin position="1"/>
        <end position="928"/>
    </location>
</feature>
<feature type="domain" description="PCI" evidence="2">
    <location>
        <begin position="656"/>
        <end position="832"/>
    </location>
</feature>
<feature type="region of interest" description="Disordered" evidence="3">
    <location>
        <begin position="1"/>
        <end position="37"/>
    </location>
</feature>
<feature type="region of interest" description="Disordered" evidence="3">
    <location>
        <begin position="157"/>
        <end position="286"/>
    </location>
</feature>
<feature type="region of interest" description="Disordered" evidence="3">
    <location>
        <begin position="864"/>
        <end position="928"/>
    </location>
</feature>
<feature type="compositionally biased region" description="Acidic residues" evidence="3">
    <location>
        <begin position="11"/>
        <end position="20"/>
    </location>
</feature>
<feature type="compositionally biased region" description="Polar residues" evidence="3">
    <location>
        <begin position="22"/>
        <end position="33"/>
    </location>
</feature>
<feature type="compositionally biased region" description="Acidic residues" evidence="3">
    <location>
        <begin position="162"/>
        <end position="171"/>
    </location>
</feature>
<feature type="compositionally biased region" description="Basic and acidic residues" evidence="3">
    <location>
        <begin position="172"/>
        <end position="184"/>
    </location>
</feature>
<feature type="compositionally biased region" description="Acidic residues" evidence="3">
    <location>
        <begin position="215"/>
        <end position="240"/>
    </location>
</feature>
<feature type="compositionally biased region" description="Basic and acidic residues" evidence="3">
    <location>
        <begin position="245"/>
        <end position="264"/>
    </location>
</feature>
<feature type="compositionally biased region" description="Basic residues" evidence="3">
    <location>
        <begin position="265"/>
        <end position="277"/>
    </location>
</feature>
<feature type="compositionally biased region" description="Basic residues" evidence="3">
    <location>
        <begin position="898"/>
        <end position="909"/>
    </location>
</feature>
<feature type="compositionally biased region" description="Low complexity" evidence="3">
    <location>
        <begin position="910"/>
        <end position="921"/>
    </location>
</feature>
<feature type="modified residue" description="Phosphoserine" evidence="1">
    <location>
        <position position="34"/>
    </location>
</feature>
<feature type="modified residue" description="Phosphoserine" evidence="1">
    <location>
        <position position="165"/>
    </location>
</feature>
<feature type="modified residue" description="Phosphoserine" evidence="1">
    <location>
        <position position="177"/>
    </location>
</feature>
<feature type="modified residue" description="Phosphoserine" evidence="1">
    <location>
        <position position="186"/>
    </location>
</feature>
<reference key="1">
    <citation type="journal article" date="2007" name="Nature">
        <title>Evolution of genes and genomes on the Drosophila phylogeny.</title>
        <authorList>
            <consortium name="Drosophila 12 genomes consortium"/>
        </authorList>
    </citation>
    <scope>NUCLEOTIDE SEQUENCE [LARGE SCALE GENOMIC DNA]</scope>
    <source>
        <strain>Tucson 15287-2541.00</strain>
    </source>
</reference>
<sequence length="928" mass="107695">MSRFFANGSDSESESSEEEVPTQFNNKAQNFQFSDDEEEVKRVVRSTKEKRYENLTSIIKTIRNHKKIKDIPNTLSSFEDLTRAYTKALPVISKEENGITPRFYIRCLAELEDFINEVWEDREGRKNLSKNNSKSLGTLRQKVRKYIKDFEDDLARFREAPDQESDVDEGEGDVHDSDADRAGDDSDTGFGVGAKMAELPKAAKSSVQPTKIIADDDDSEDSIDWDPDTESETESSEDENMYQNMRERFLKRTTEKEDKDDDKRKDKRKEQKHKVRKRADDDEDGEGWETVVKGNVVEKPKMFEKDAEIDVPLVLAKLIEIMSARGKKRTDRRLQIDLLFELRDISEQHSLGTAVAIKIHFSIISAIFDYNLKISEPMKLEHWALLLEVMQSMMKLLLANPDINMNESIAEEHEEYATAPFYVRGCPLAAVERLDDEFTKLLKECDPHSNDYVSRLKDEVNVVKTIELVVQYFELSGSNNERCRIYLRKIEHLYYKFDPEVLKRKRGEQQPATGAAGATPAAPVQSSVEVMDKLCKFIYAKDDTDRIRTRAILAHIYHHAMHDNWFQARDLVLMSHLQDNIDAADPSTRILYNRMMANLGLCAFRQENIKDAHHCLVDLMVTGKPKELLAQGLLPQRQHERSAEQEKIEKQRQMPFHMHINLELLECVYLVSAMLLEIPYIAAHEFDARRRMISKTFYQQLRSSERQSLVGPPESMREHVVAAAKAMRCGNWQACANFIVNKKMNTKVWDLFYESERVREMLVKFIKEESLRTYLFTYSNVYTSISIPSLSQMYELPLPKVHSIISKMIINEELMASLDDPSETVVMHRSEPSRLQALAMQFVDKVTNLVDVNEKVFDMKQGNFFQRGNMGNRDRGYNRNQNNQGGNWGGQRRDNRSQRNRNQRGHHKQNQQQNQQQQQQQVHTIDEE</sequence>
<comment type="function">
    <text evidence="1">Component of the eukaryotic translation initiation factor 3 (eIF-3) complex, which is involved in protein synthesis of a specialized repertoire of mRNAs and, together with other initiation factors, stimulates binding of mRNA and methionyl-tRNAi to the 40S ribosome. The eIF-3 complex specifically targets and initiates translation of a subset of mRNAs involved in cell proliferation.</text>
</comment>
<comment type="subunit">
    <text evidence="1">Component of the eukaryotic translation initiation factor 3 (eIF-3) complex. The eIF-3 complex interacts with pix.</text>
</comment>
<comment type="subcellular location">
    <subcellularLocation>
        <location evidence="1">Cytoplasm</location>
    </subcellularLocation>
</comment>
<comment type="similarity">
    <text evidence="1">Belongs to the eIF-3 subunit C family.</text>
</comment>
<dbReference type="EMBL" id="CH916367">
    <property type="protein sequence ID" value="EDW02107.1"/>
    <property type="molecule type" value="Genomic_DNA"/>
</dbReference>
<dbReference type="SMR" id="B4J789"/>
<dbReference type="FunCoup" id="B4J789">
    <property type="interactions" value="1962"/>
</dbReference>
<dbReference type="STRING" id="7222.B4J789"/>
<dbReference type="EnsemblMetazoa" id="FBtr0155491">
    <property type="protein sequence ID" value="FBpp0153983"/>
    <property type="gene ID" value="FBgn0127541"/>
</dbReference>
<dbReference type="EnsemblMetazoa" id="XM_001987204.2">
    <property type="protein sequence ID" value="XP_001987240.1"/>
    <property type="gene ID" value="LOC6559214"/>
</dbReference>
<dbReference type="GeneID" id="6559214"/>
<dbReference type="KEGG" id="dgr:6559214"/>
<dbReference type="CTD" id="8663"/>
<dbReference type="eggNOG" id="KOG1076">
    <property type="taxonomic scope" value="Eukaryota"/>
</dbReference>
<dbReference type="HOGENOM" id="CLU_004304_0_0_1"/>
<dbReference type="InParanoid" id="B4J789"/>
<dbReference type="OMA" id="FRCGLIK"/>
<dbReference type="OrthoDB" id="29647at2759"/>
<dbReference type="PhylomeDB" id="B4J789"/>
<dbReference type="ChiTaRS" id="eIF3-S8">
    <property type="organism name" value="fly"/>
</dbReference>
<dbReference type="Proteomes" id="UP000001070">
    <property type="component" value="Unassembled WGS sequence"/>
</dbReference>
<dbReference type="GO" id="GO:0016282">
    <property type="term" value="C:eukaryotic 43S preinitiation complex"/>
    <property type="evidence" value="ECO:0007669"/>
    <property type="project" value="UniProtKB-UniRule"/>
</dbReference>
<dbReference type="GO" id="GO:0033290">
    <property type="term" value="C:eukaryotic 48S preinitiation complex"/>
    <property type="evidence" value="ECO:0007669"/>
    <property type="project" value="UniProtKB-UniRule"/>
</dbReference>
<dbReference type="GO" id="GO:0005852">
    <property type="term" value="C:eukaryotic translation initiation factor 3 complex"/>
    <property type="evidence" value="ECO:0007669"/>
    <property type="project" value="UniProtKB-UniRule"/>
</dbReference>
<dbReference type="GO" id="GO:0003723">
    <property type="term" value="F:RNA binding"/>
    <property type="evidence" value="ECO:0007669"/>
    <property type="project" value="InterPro"/>
</dbReference>
<dbReference type="GO" id="GO:0003743">
    <property type="term" value="F:translation initiation factor activity"/>
    <property type="evidence" value="ECO:0007669"/>
    <property type="project" value="UniProtKB-UniRule"/>
</dbReference>
<dbReference type="GO" id="GO:0031369">
    <property type="term" value="F:translation initiation factor binding"/>
    <property type="evidence" value="ECO:0007669"/>
    <property type="project" value="InterPro"/>
</dbReference>
<dbReference type="GO" id="GO:0001732">
    <property type="term" value="P:formation of cytoplasmic translation initiation complex"/>
    <property type="evidence" value="ECO:0007669"/>
    <property type="project" value="UniProtKB-UniRule"/>
</dbReference>
<dbReference type="HAMAP" id="MF_03002">
    <property type="entry name" value="eIF3c"/>
    <property type="match status" value="1"/>
</dbReference>
<dbReference type="InterPro" id="IPR027516">
    <property type="entry name" value="EIF3C"/>
</dbReference>
<dbReference type="InterPro" id="IPR008905">
    <property type="entry name" value="EIF3C_N_dom"/>
</dbReference>
<dbReference type="InterPro" id="IPR000717">
    <property type="entry name" value="PCI_dom"/>
</dbReference>
<dbReference type="InterPro" id="IPR036390">
    <property type="entry name" value="WH_DNA-bd_sf"/>
</dbReference>
<dbReference type="PANTHER" id="PTHR13937">
    <property type="entry name" value="EUKARYOTIC TRANSLATION INITATION FACTOR 3, SUBUNIT 8 EIF3S8 -RELATED"/>
    <property type="match status" value="1"/>
</dbReference>
<dbReference type="PANTHER" id="PTHR13937:SF0">
    <property type="entry name" value="EUKARYOTIC TRANSLATION INITIATION FACTOR 3 SUBUNIT C-RELATED"/>
    <property type="match status" value="1"/>
</dbReference>
<dbReference type="Pfam" id="PF05470">
    <property type="entry name" value="eIF-3c_N"/>
    <property type="match status" value="1"/>
</dbReference>
<dbReference type="Pfam" id="PF01399">
    <property type="entry name" value="PCI"/>
    <property type="match status" value="1"/>
</dbReference>
<dbReference type="SMART" id="SM00088">
    <property type="entry name" value="PINT"/>
    <property type="match status" value="1"/>
</dbReference>
<dbReference type="SUPFAM" id="SSF46785">
    <property type="entry name" value="Winged helix' DNA-binding domain"/>
    <property type="match status" value="1"/>
</dbReference>
<dbReference type="PROSITE" id="PS50250">
    <property type="entry name" value="PCI"/>
    <property type="match status" value="1"/>
</dbReference>
<gene>
    <name evidence="1" type="primary">eIF3c</name>
    <name evidence="1" type="synonym">eIF3-S8</name>
    <name type="ORF">GH20077</name>
</gene>
<evidence type="ECO:0000255" key="1">
    <source>
        <dbReference type="HAMAP-Rule" id="MF_03002"/>
    </source>
</evidence>
<evidence type="ECO:0000255" key="2">
    <source>
        <dbReference type="PROSITE-ProRule" id="PRU01185"/>
    </source>
</evidence>
<evidence type="ECO:0000256" key="3">
    <source>
        <dbReference type="SAM" id="MobiDB-lite"/>
    </source>
</evidence>
<organism>
    <name type="scientific">Drosophila grimshawi</name>
    <name type="common">Hawaiian fruit fly</name>
    <name type="synonym">Idiomyia grimshawi</name>
    <dbReference type="NCBI Taxonomy" id="7222"/>
    <lineage>
        <taxon>Eukaryota</taxon>
        <taxon>Metazoa</taxon>
        <taxon>Ecdysozoa</taxon>
        <taxon>Arthropoda</taxon>
        <taxon>Hexapoda</taxon>
        <taxon>Insecta</taxon>
        <taxon>Pterygota</taxon>
        <taxon>Neoptera</taxon>
        <taxon>Endopterygota</taxon>
        <taxon>Diptera</taxon>
        <taxon>Brachycera</taxon>
        <taxon>Muscomorpha</taxon>
        <taxon>Ephydroidea</taxon>
        <taxon>Drosophilidae</taxon>
        <taxon>Drosophila</taxon>
        <taxon>Hawaiian Drosophila</taxon>
    </lineage>
</organism>
<protein>
    <recommendedName>
        <fullName evidence="1">Eukaryotic translation initiation factor 3 subunit C</fullName>
        <shortName evidence="1">eIF3c</shortName>
    </recommendedName>
    <alternativeName>
        <fullName evidence="1">Eukaryotic translation initiation factor 3 subunit 8</fullName>
    </alternativeName>
</protein>
<keyword id="KW-0963">Cytoplasm</keyword>
<keyword id="KW-0396">Initiation factor</keyword>
<keyword id="KW-0597">Phosphoprotein</keyword>
<keyword id="KW-0648">Protein biosynthesis</keyword>
<keyword id="KW-1185">Reference proteome</keyword>